<sequence length="291" mass="30878">MSAIDDLPPLREVIRAHGLSAQKSLGQNFLLDLNLTARIARGSGPLEGATVVEVGPGPGGLTRALLALGARKVIAIERDHRCIAALNEIAAAYPGRLEIIEGDALKVDVRPHLDGAEARVVANLPYNVGTQLLVGWLSTDPWPPWFSSLTLMFQREVAERIVAGPDSKAYGRLAVLTGWRAQARILFDVAPSAFVPPPKVTSSVIHVVPRAEPVPCALRDLERVTEAAFGQRRKMLRQSLKSLGVDPLALLSETGIDETARAEEIDVAGFLALANAFGRARGGGTGDAAGA</sequence>
<organism>
    <name type="scientific">Azorhizobium caulinodans (strain ATCC 43989 / DSM 5975 / JCM 20966 / LMG 6465 / NBRC 14845 / NCIMB 13405 / ORS 571)</name>
    <dbReference type="NCBI Taxonomy" id="438753"/>
    <lineage>
        <taxon>Bacteria</taxon>
        <taxon>Pseudomonadati</taxon>
        <taxon>Pseudomonadota</taxon>
        <taxon>Alphaproteobacteria</taxon>
        <taxon>Hyphomicrobiales</taxon>
        <taxon>Xanthobacteraceae</taxon>
        <taxon>Azorhizobium</taxon>
    </lineage>
</organism>
<evidence type="ECO:0000255" key="1">
    <source>
        <dbReference type="HAMAP-Rule" id="MF_00607"/>
    </source>
</evidence>
<proteinExistence type="inferred from homology"/>
<accession>A8HVI9</accession>
<gene>
    <name evidence="1" type="primary">rsmA</name>
    <name evidence="1" type="synonym">ksgA</name>
    <name type="ordered locus">AZC_4320</name>
</gene>
<dbReference type="EC" id="2.1.1.182" evidence="1"/>
<dbReference type="EMBL" id="AP009384">
    <property type="protein sequence ID" value="BAF90318.1"/>
    <property type="molecule type" value="Genomic_DNA"/>
</dbReference>
<dbReference type="RefSeq" id="WP_012172840.1">
    <property type="nucleotide sequence ID" value="NC_009937.1"/>
</dbReference>
<dbReference type="SMR" id="A8HVI9"/>
<dbReference type="STRING" id="438753.AZC_4320"/>
<dbReference type="KEGG" id="azc:AZC_4320"/>
<dbReference type="eggNOG" id="COG0030">
    <property type="taxonomic scope" value="Bacteria"/>
</dbReference>
<dbReference type="HOGENOM" id="CLU_041220_0_1_5"/>
<dbReference type="Proteomes" id="UP000000270">
    <property type="component" value="Chromosome"/>
</dbReference>
<dbReference type="GO" id="GO:0005829">
    <property type="term" value="C:cytosol"/>
    <property type="evidence" value="ECO:0007669"/>
    <property type="project" value="TreeGrafter"/>
</dbReference>
<dbReference type="GO" id="GO:0052908">
    <property type="term" value="F:16S rRNA (adenine(1518)-N(6)/adenine(1519)-N(6))-dimethyltransferase activity"/>
    <property type="evidence" value="ECO:0007669"/>
    <property type="project" value="UniProtKB-EC"/>
</dbReference>
<dbReference type="GO" id="GO:0003723">
    <property type="term" value="F:RNA binding"/>
    <property type="evidence" value="ECO:0007669"/>
    <property type="project" value="UniProtKB-KW"/>
</dbReference>
<dbReference type="CDD" id="cd02440">
    <property type="entry name" value="AdoMet_MTases"/>
    <property type="match status" value="1"/>
</dbReference>
<dbReference type="FunFam" id="1.10.8.100:FF:000001">
    <property type="entry name" value="Ribosomal RNA small subunit methyltransferase A"/>
    <property type="match status" value="1"/>
</dbReference>
<dbReference type="Gene3D" id="1.10.8.100">
    <property type="entry name" value="Ribosomal RNA adenine dimethylase-like, domain 2"/>
    <property type="match status" value="1"/>
</dbReference>
<dbReference type="Gene3D" id="3.40.50.150">
    <property type="entry name" value="Vaccinia Virus protein VP39"/>
    <property type="match status" value="1"/>
</dbReference>
<dbReference type="HAMAP" id="MF_00607">
    <property type="entry name" value="16SrRNA_methyltr_A"/>
    <property type="match status" value="1"/>
</dbReference>
<dbReference type="InterPro" id="IPR001737">
    <property type="entry name" value="KsgA/Erm"/>
</dbReference>
<dbReference type="InterPro" id="IPR023165">
    <property type="entry name" value="rRNA_Ade_diMease-like_C"/>
</dbReference>
<dbReference type="InterPro" id="IPR020596">
    <property type="entry name" value="rRNA_Ade_Mease_Trfase_CS"/>
</dbReference>
<dbReference type="InterPro" id="IPR020598">
    <property type="entry name" value="rRNA_Ade_methylase_Trfase_N"/>
</dbReference>
<dbReference type="InterPro" id="IPR011530">
    <property type="entry name" value="rRNA_adenine_dimethylase"/>
</dbReference>
<dbReference type="InterPro" id="IPR029063">
    <property type="entry name" value="SAM-dependent_MTases_sf"/>
</dbReference>
<dbReference type="NCBIfam" id="TIGR00755">
    <property type="entry name" value="ksgA"/>
    <property type="match status" value="1"/>
</dbReference>
<dbReference type="PANTHER" id="PTHR11727">
    <property type="entry name" value="DIMETHYLADENOSINE TRANSFERASE"/>
    <property type="match status" value="1"/>
</dbReference>
<dbReference type="PANTHER" id="PTHR11727:SF7">
    <property type="entry name" value="DIMETHYLADENOSINE TRANSFERASE-RELATED"/>
    <property type="match status" value="1"/>
</dbReference>
<dbReference type="Pfam" id="PF00398">
    <property type="entry name" value="RrnaAD"/>
    <property type="match status" value="1"/>
</dbReference>
<dbReference type="SMART" id="SM00650">
    <property type="entry name" value="rADc"/>
    <property type="match status" value="1"/>
</dbReference>
<dbReference type="SUPFAM" id="SSF53335">
    <property type="entry name" value="S-adenosyl-L-methionine-dependent methyltransferases"/>
    <property type="match status" value="1"/>
</dbReference>
<dbReference type="PROSITE" id="PS01131">
    <property type="entry name" value="RRNA_A_DIMETH"/>
    <property type="match status" value="1"/>
</dbReference>
<dbReference type="PROSITE" id="PS51689">
    <property type="entry name" value="SAM_RNA_A_N6_MT"/>
    <property type="match status" value="1"/>
</dbReference>
<keyword id="KW-0963">Cytoplasm</keyword>
<keyword id="KW-0489">Methyltransferase</keyword>
<keyword id="KW-1185">Reference proteome</keyword>
<keyword id="KW-0694">RNA-binding</keyword>
<keyword id="KW-0698">rRNA processing</keyword>
<keyword id="KW-0949">S-adenosyl-L-methionine</keyword>
<keyword id="KW-0808">Transferase</keyword>
<protein>
    <recommendedName>
        <fullName evidence="1">Ribosomal RNA small subunit methyltransferase A</fullName>
        <ecNumber evidence="1">2.1.1.182</ecNumber>
    </recommendedName>
    <alternativeName>
        <fullName evidence="1">16S rRNA (adenine(1518)-N(6)/adenine(1519)-N(6))-dimethyltransferase</fullName>
    </alternativeName>
    <alternativeName>
        <fullName evidence="1">16S rRNA dimethyladenosine transferase</fullName>
    </alternativeName>
    <alternativeName>
        <fullName evidence="1">16S rRNA dimethylase</fullName>
    </alternativeName>
    <alternativeName>
        <fullName evidence="1">S-adenosylmethionine-6-N', N'-adenosyl(rRNA) dimethyltransferase</fullName>
    </alternativeName>
</protein>
<reference key="1">
    <citation type="submission" date="2007-04" db="EMBL/GenBank/DDBJ databases">
        <title>Complete genome sequence of the nitrogen-fixing bacterium Azorhizobium caulinodans ORS571.</title>
        <authorList>
            <person name="Lee K.B."/>
            <person name="Backer P.D."/>
            <person name="Aono T."/>
            <person name="Liu C.T."/>
            <person name="Suzuki S."/>
            <person name="Suzuki T."/>
            <person name="Kaneko T."/>
            <person name="Yamada M."/>
            <person name="Tabata S."/>
            <person name="Kupfer D.M."/>
            <person name="Najar F.Z."/>
            <person name="Wiley G.B."/>
            <person name="Roe B."/>
            <person name="Binnewies T."/>
            <person name="Ussery D."/>
            <person name="Vereecke D."/>
            <person name="Gevers D."/>
            <person name="Holsters M."/>
            <person name="Oyaizu H."/>
        </authorList>
    </citation>
    <scope>NUCLEOTIDE SEQUENCE [LARGE SCALE GENOMIC DNA]</scope>
    <source>
        <strain>ATCC 43989 / DSM 5975 / JCM 20966 / LMG 6465 / NBRC 14845 / NCIMB 13405 / ORS 571</strain>
    </source>
</reference>
<comment type="function">
    <text evidence="1">Specifically dimethylates two adjacent adenosines (A1518 and A1519) in the loop of a conserved hairpin near the 3'-end of 16S rRNA in the 30S particle. May play a critical role in biogenesis of 30S subunits.</text>
</comment>
<comment type="catalytic activity">
    <reaction evidence="1">
        <text>adenosine(1518)/adenosine(1519) in 16S rRNA + 4 S-adenosyl-L-methionine = N(6)-dimethyladenosine(1518)/N(6)-dimethyladenosine(1519) in 16S rRNA + 4 S-adenosyl-L-homocysteine + 4 H(+)</text>
        <dbReference type="Rhea" id="RHEA:19609"/>
        <dbReference type="Rhea" id="RHEA-COMP:10232"/>
        <dbReference type="Rhea" id="RHEA-COMP:10233"/>
        <dbReference type="ChEBI" id="CHEBI:15378"/>
        <dbReference type="ChEBI" id="CHEBI:57856"/>
        <dbReference type="ChEBI" id="CHEBI:59789"/>
        <dbReference type="ChEBI" id="CHEBI:74411"/>
        <dbReference type="ChEBI" id="CHEBI:74493"/>
        <dbReference type="EC" id="2.1.1.182"/>
    </reaction>
</comment>
<comment type="subcellular location">
    <subcellularLocation>
        <location evidence="1">Cytoplasm</location>
    </subcellularLocation>
</comment>
<comment type="similarity">
    <text evidence="1">Belongs to the class I-like SAM-binding methyltransferase superfamily. rRNA adenine N(6)-methyltransferase family. RsmA subfamily.</text>
</comment>
<name>RSMA_AZOC5</name>
<feature type="chain" id="PRO_1000072645" description="Ribosomal RNA small subunit methyltransferase A">
    <location>
        <begin position="1"/>
        <end position="291"/>
    </location>
</feature>
<feature type="binding site" evidence="1">
    <location>
        <position position="28"/>
    </location>
    <ligand>
        <name>S-adenosyl-L-methionine</name>
        <dbReference type="ChEBI" id="CHEBI:59789"/>
    </ligand>
</feature>
<feature type="binding site" evidence="1">
    <location>
        <position position="30"/>
    </location>
    <ligand>
        <name>S-adenosyl-L-methionine</name>
        <dbReference type="ChEBI" id="CHEBI:59789"/>
    </ligand>
</feature>
<feature type="binding site" evidence="1">
    <location>
        <position position="55"/>
    </location>
    <ligand>
        <name>S-adenosyl-L-methionine</name>
        <dbReference type="ChEBI" id="CHEBI:59789"/>
    </ligand>
</feature>
<feature type="binding site" evidence="1">
    <location>
        <position position="77"/>
    </location>
    <ligand>
        <name>S-adenosyl-L-methionine</name>
        <dbReference type="ChEBI" id="CHEBI:59789"/>
    </ligand>
</feature>
<feature type="binding site" evidence="1">
    <location>
        <position position="103"/>
    </location>
    <ligand>
        <name>S-adenosyl-L-methionine</name>
        <dbReference type="ChEBI" id="CHEBI:59789"/>
    </ligand>
</feature>
<feature type="binding site" evidence="1">
    <location>
        <position position="123"/>
    </location>
    <ligand>
        <name>S-adenosyl-L-methionine</name>
        <dbReference type="ChEBI" id="CHEBI:59789"/>
    </ligand>
</feature>